<protein>
    <recommendedName>
        <fullName evidence="1">Inositol 2-dehydrogenase</fullName>
        <ecNumber evidence="1">1.1.1.18</ecNumber>
    </recommendedName>
    <alternativeName>
        <fullName evidence="1">Myo-inositol 2-dehydrogenase</fullName>
        <shortName evidence="1">MI 2-dehydrogenase</shortName>
    </alternativeName>
</protein>
<keyword id="KW-0520">NAD</keyword>
<keyword id="KW-0560">Oxidoreductase</keyword>
<comment type="function">
    <text evidence="1">Involved in the oxidation of myo-inositol (MI) to 2-keto-myo-inositol (2KMI or 2-inosose).</text>
</comment>
<comment type="catalytic activity">
    <reaction evidence="1">
        <text>myo-inositol + NAD(+) = scyllo-inosose + NADH + H(+)</text>
        <dbReference type="Rhea" id="RHEA:16949"/>
        <dbReference type="ChEBI" id="CHEBI:15378"/>
        <dbReference type="ChEBI" id="CHEBI:17268"/>
        <dbReference type="ChEBI" id="CHEBI:17811"/>
        <dbReference type="ChEBI" id="CHEBI:57540"/>
        <dbReference type="ChEBI" id="CHEBI:57945"/>
        <dbReference type="EC" id="1.1.1.18"/>
    </reaction>
</comment>
<comment type="subunit">
    <text evidence="1">Homotetramer.</text>
</comment>
<comment type="similarity">
    <text evidence="1">Belongs to the Gfo/Idh/MocA family.</text>
</comment>
<gene>
    <name evidence="1" type="primary">iolG</name>
    <name type="ordered locus">Bcen_0946</name>
</gene>
<feature type="chain" id="PRO_0000352560" description="Inositol 2-dehydrogenase">
    <location>
        <begin position="1"/>
        <end position="337"/>
    </location>
</feature>
<sequence length="337" mass="36547">MTLQIGVIGCGAIGQDHIRRLTRTLSGARVVAVNDIDPQQARDAVTKYGLDAEIYGDGHEVVAAADVQAVLVTSWGPTHEAFVLDAIAHGKPVFCEKPLAVTAEGCMRIVEAEVAHGKRLVQVGFMRPYDEGYRALKRVIDSGQIGAPLMLHCAHRNQSVGERYTTDMAITDTLIHELDVLRWLLGEDYASAQVVYPKKTRHASAHLADPQIVLLETASGVRIDVEIFVNCQYGYDIQCEVVGEQGIAKLPDPPAVGLKHAARQSVEIMTDWKERFIASYDVELQAFIDGVRQGALTGPSAWDGYAAAVAADACVRAQQSGAVEPIAMAERPAFYRG</sequence>
<dbReference type="EC" id="1.1.1.18" evidence="1"/>
<dbReference type="EMBL" id="CP000378">
    <property type="protein sequence ID" value="ABF75855.1"/>
    <property type="molecule type" value="Genomic_DNA"/>
</dbReference>
<dbReference type="SMR" id="Q1BX00"/>
<dbReference type="HOGENOM" id="CLU_023194_0_1_4"/>
<dbReference type="GO" id="GO:0050112">
    <property type="term" value="F:inositol 2-dehydrogenase (NAD+) activity"/>
    <property type="evidence" value="ECO:0007669"/>
    <property type="project" value="UniProtKB-UniRule"/>
</dbReference>
<dbReference type="GO" id="GO:0000166">
    <property type="term" value="F:nucleotide binding"/>
    <property type="evidence" value="ECO:0007669"/>
    <property type="project" value="InterPro"/>
</dbReference>
<dbReference type="GO" id="GO:0019310">
    <property type="term" value="P:inositol catabolic process"/>
    <property type="evidence" value="ECO:0007669"/>
    <property type="project" value="UniProtKB-UniRule"/>
</dbReference>
<dbReference type="Gene3D" id="3.30.360.10">
    <property type="entry name" value="Dihydrodipicolinate Reductase, domain 2"/>
    <property type="match status" value="1"/>
</dbReference>
<dbReference type="Gene3D" id="3.40.50.720">
    <property type="entry name" value="NAD(P)-binding Rossmann-like Domain"/>
    <property type="match status" value="1"/>
</dbReference>
<dbReference type="HAMAP" id="MF_01671">
    <property type="entry name" value="IolG"/>
    <property type="match status" value="1"/>
</dbReference>
<dbReference type="InterPro" id="IPR050424">
    <property type="entry name" value="Gfo-Idh-MocA_inositol_DH"/>
</dbReference>
<dbReference type="InterPro" id="IPR004104">
    <property type="entry name" value="Gfo/Idh/MocA-like_OxRdtase_C"/>
</dbReference>
<dbReference type="InterPro" id="IPR000683">
    <property type="entry name" value="Gfo/Idh/MocA-like_OxRdtase_N"/>
</dbReference>
<dbReference type="InterPro" id="IPR023794">
    <property type="entry name" value="MI/DCI_dehydrogenase"/>
</dbReference>
<dbReference type="InterPro" id="IPR036291">
    <property type="entry name" value="NAD(P)-bd_dom_sf"/>
</dbReference>
<dbReference type="PANTHER" id="PTHR43593">
    <property type="match status" value="1"/>
</dbReference>
<dbReference type="PANTHER" id="PTHR43593:SF1">
    <property type="entry name" value="INOSITOL 2-DEHYDROGENASE"/>
    <property type="match status" value="1"/>
</dbReference>
<dbReference type="Pfam" id="PF01408">
    <property type="entry name" value="GFO_IDH_MocA"/>
    <property type="match status" value="1"/>
</dbReference>
<dbReference type="Pfam" id="PF02894">
    <property type="entry name" value="GFO_IDH_MocA_C"/>
    <property type="match status" value="1"/>
</dbReference>
<dbReference type="SUPFAM" id="SSF55347">
    <property type="entry name" value="Glyceraldehyde-3-phosphate dehydrogenase-like, C-terminal domain"/>
    <property type="match status" value="1"/>
</dbReference>
<dbReference type="SUPFAM" id="SSF51735">
    <property type="entry name" value="NAD(P)-binding Rossmann-fold domains"/>
    <property type="match status" value="1"/>
</dbReference>
<name>IOLG_BURO1</name>
<organism>
    <name type="scientific">Burkholderia orbicola (strain AU 1054)</name>
    <dbReference type="NCBI Taxonomy" id="331271"/>
    <lineage>
        <taxon>Bacteria</taxon>
        <taxon>Pseudomonadati</taxon>
        <taxon>Pseudomonadota</taxon>
        <taxon>Betaproteobacteria</taxon>
        <taxon>Burkholderiales</taxon>
        <taxon>Burkholderiaceae</taxon>
        <taxon>Burkholderia</taxon>
        <taxon>Burkholderia cepacia complex</taxon>
        <taxon>Burkholderia orbicola</taxon>
    </lineage>
</organism>
<accession>Q1BX00</accession>
<proteinExistence type="inferred from homology"/>
<reference key="1">
    <citation type="submission" date="2006-05" db="EMBL/GenBank/DDBJ databases">
        <title>Complete sequence of chromosome 1 of Burkholderia cenocepacia AU 1054.</title>
        <authorList>
            <consortium name="US DOE Joint Genome Institute"/>
            <person name="Copeland A."/>
            <person name="Lucas S."/>
            <person name="Lapidus A."/>
            <person name="Barry K."/>
            <person name="Detter J.C."/>
            <person name="Glavina del Rio T."/>
            <person name="Hammon N."/>
            <person name="Israni S."/>
            <person name="Dalin E."/>
            <person name="Tice H."/>
            <person name="Pitluck S."/>
            <person name="Chain P."/>
            <person name="Malfatti S."/>
            <person name="Shin M."/>
            <person name="Vergez L."/>
            <person name="Schmutz J."/>
            <person name="Larimer F."/>
            <person name="Land M."/>
            <person name="Hauser L."/>
            <person name="Kyrpides N."/>
            <person name="Lykidis A."/>
            <person name="LiPuma J.J."/>
            <person name="Konstantinidis K."/>
            <person name="Tiedje J.M."/>
            <person name="Richardson P."/>
        </authorList>
    </citation>
    <scope>NUCLEOTIDE SEQUENCE [LARGE SCALE GENOMIC DNA]</scope>
    <source>
        <strain>AU 1054</strain>
    </source>
</reference>
<evidence type="ECO:0000255" key="1">
    <source>
        <dbReference type="HAMAP-Rule" id="MF_01671"/>
    </source>
</evidence>